<comment type="function">
    <text>May stabilize HDL (high density lipoprotein) structure by its association with lipids, and affect the HDL metabolism.</text>
</comment>
<comment type="subunit">
    <text evidence="1">Monomer. Interacts with NAXE and NDRG1 (By similarity).</text>
</comment>
<comment type="subcellular location">
    <subcellularLocation>
        <location evidence="1">Secreted</location>
    </subcellularLocation>
</comment>
<comment type="tissue specificity">
    <text>Plasma.</text>
</comment>
<comment type="similarity">
    <text evidence="3">Belongs to the apolipoprotein A2 family.</text>
</comment>
<name>APOA2_LEPWE</name>
<keyword id="KW-0165">Cleavage on pair of basic residues</keyword>
<keyword id="KW-0345">HDL</keyword>
<keyword id="KW-0445">Lipid transport</keyword>
<keyword id="KW-1185">Reference proteome</keyword>
<keyword id="KW-0964">Secreted</keyword>
<keyword id="KW-0732">Signal</keyword>
<keyword id="KW-0813">Transport</keyword>
<feature type="signal peptide" evidence="2">
    <location>
        <begin position="1"/>
        <end position="18"/>
    </location>
</feature>
<feature type="chain" id="PRO_0000425352" description="Proapolipoprotein A-II">
    <location>
        <begin position="19"/>
        <end position="100"/>
    </location>
</feature>
<feature type="chain" id="PRO_0000424678" description="Apolipoprotein A-II" evidence="1">
    <location>
        <begin position="24"/>
        <end position="100"/>
    </location>
</feature>
<feature type="chain" id="PRO_0000424748" description="Truncated apolipoprotein A-II" evidence="1">
    <location>
        <begin position="24"/>
        <end position="99"/>
    </location>
</feature>
<sequence length="100" mass="11193">MKLLALAVLLLAVCSLEGAFVRRQAEEPNLQSLVAQYFQTMTDYGKDLLEKAKGPELQAQAKAYFEKTQEQLTPLVKKAGTDLINFLSNFMDLRTQPATQ</sequence>
<accession>P0DM93</accession>
<reference key="1">
    <citation type="submission" date="2013-04" db="EMBL/GenBank/DDBJ databases">
        <authorList>
            <person name="Di Palma F."/>
            <person name="Alfoldi J."/>
            <person name="Johnson J."/>
            <person name="Berlin A."/>
            <person name="Gnerre S."/>
            <person name="Jaffe D."/>
            <person name="MacCallum I."/>
            <person name="Young S."/>
            <person name="Walker B.J."/>
            <person name="Lindblad-Toh K."/>
        </authorList>
    </citation>
    <scope>NUCLEOTIDE SEQUENCE [LARGE SCALE GENOMIC DNA]</scope>
</reference>
<reference key="2">
    <citation type="unpublished observations" date="2013-10">
        <authorList>
            <person name="Puppione D.L."/>
        </authorList>
    </citation>
    <scope>IDENTIFICATION</scope>
</reference>
<proteinExistence type="evidence at transcript level"/>
<protein>
    <recommendedName>
        <fullName>Apolipoprotein A-II</fullName>
        <shortName>Apo-AII</shortName>
        <shortName>ApoA-II</shortName>
    </recommendedName>
    <alternativeName>
        <fullName>Apolipoprotein A2</fullName>
    </alternativeName>
    <component>
        <recommendedName>
            <fullName>Proapolipoprotein A-II</fullName>
            <shortName>ProapoA-II</shortName>
        </recommendedName>
    </component>
    <component>
        <recommendedName>
            <fullName>Truncated apolipoprotein A-II</fullName>
        </recommendedName>
    </component>
</protein>
<organism>
    <name type="scientific">Leptonychotes weddellii</name>
    <name type="common">Weddell seal</name>
    <name type="synonym">Otaria weddellii</name>
    <dbReference type="NCBI Taxonomy" id="9713"/>
    <lineage>
        <taxon>Eukaryota</taxon>
        <taxon>Metazoa</taxon>
        <taxon>Chordata</taxon>
        <taxon>Craniata</taxon>
        <taxon>Vertebrata</taxon>
        <taxon>Euteleostomi</taxon>
        <taxon>Mammalia</taxon>
        <taxon>Eutheria</taxon>
        <taxon>Laurasiatheria</taxon>
        <taxon>Carnivora</taxon>
        <taxon>Caniformia</taxon>
        <taxon>Pinnipedia</taxon>
        <taxon>Phocidae</taxon>
        <taxon>Monachinae</taxon>
        <taxon>Lobodontini</taxon>
        <taxon>Leptonychotes</taxon>
    </lineage>
</organism>
<gene>
    <name type="primary">APOA2</name>
</gene>
<evidence type="ECO:0000250" key="1">
    <source>
        <dbReference type="UniProtKB" id="P02652"/>
    </source>
</evidence>
<evidence type="ECO:0000255" key="2"/>
<evidence type="ECO:0000305" key="3"/>
<dbReference type="EMBL" id="APMU01114745">
    <property type="status" value="NOT_ANNOTATED_CDS"/>
    <property type="molecule type" value="Genomic_DNA"/>
</dbReference>
<dbReference type="RefSeq" id="XP_006744469.1">
    <property type="nucleotide sequence ID" value="XM_006744406.2"/>
</dbReference>
<dbReference type="SMR" id="P0DM93"/>
<dbReference type="STRING" id="9713.P0DM93"/>
<dbReference type="GeneID" id="102733214"/>
<dbReference type="KEGG" id="lww:102733214"/>
<dbReference type="CTD" id="336"/>
<dbReference type="OrthoDB" id="9450770at2759"/>
<dbReference type="Proteomes" id="UP000245341">
    <property type="component" value="Unplaced"/>
</dbReference>
<dbReference type="GO" id="GO:0034366">
    <property type="term" value="C:spherical high-density lipoprotein particle"/>
    <property type="evidence" value="ECO:0007669"/>
    <property type="project" value="TreeGrafter"/>
</dbReference>
<dbReference type="GO" id="GO:0120020">
    <property type="term" value="F:cholesterol transfer activity"/>
    <property type="evidence" value="ECO:0007669"/>
    <property type="project" value="TreeGrafter"/>
</dbReference>
<dbReference type="GO" id="GO:0008035">
    <property type="term" value="F:high-density lipoprotein particle binding"/>
    <property type="evidence" value="ECO:0007669"/>
    <property type="project" value="TreeGrafter"/>
</dbReference>
<dbReference type="GO" id="GO:0008289">
    <property type="term" value="F:lipid binding"/>
    <property type="evidence" value="ECO:0007669"/>
    <property type="project" value="InterPro"/>
</dbReference>
<dbReference type="GO" id="GO:0042632">
    <property type="term" value="P:cholesterol homeostasis"/>
    <property type="evidence" value="ECO:0007669"/>
    <property type="project" value="TreeGrafter"/>
</dbReference>
<dbReference type="GO" id="GO:0030301">
    <property type="term" value="P:cholesterol transport"/>
    <property type="evidence" value="ECO:0007669"/>
    <property type="project" value="TreeGrafter"/>
</dbReference>
<dbReference type="GO" id="GO:0042157">
    <property type="term" value="P:lipoprotein metabolic process"/>
    <property type="evidence" value="ECO:0007669"/>
    <property type="project" value="InterPro"/>
</dbReference>
<dbReference type="GO" id="GO:0050766">
    <property type="term" value="P:positive regulation of phagocytosis"/>
    <property type="evidence" value="ECO:0000250"/>
    <property type="project" value="UniProtKB"/>
</dbReference>
<dbReference type="GO" id="GO:0050821">
    <property type="term" value="P:protein stabilization"/>
    <property type="evidence" value="ECO:0000250"/>
    <property type="project" value="UniProtKB"/>
</dbReference>
<dbReference type="Gene3D" id="6.10.250.100">
    <property type="match status" value="1"/>
</dbReference>
<dbReference type="InterPro" id="IPR006801">
    <property type="entry name" value="ApoA-II"/>
</dbReference>
<dbReference type="InterPro" id="IPR036172">
    <property type="entry name" value="ApoA-II_sf"/>
</dbReference>
<dbReference type="PANTHER" id="PTHR11027">
    <property type="entry name" value="APOLIPOPROTEIN A-II"/>
    <property type="match status" value="1"/>
</dbReference>
<dbReference type="PANTHER" id="PTHR11027:SF0">
    <property type="entry name" value="APOLIPOPROTEIN A-II"/>
    <property type="match status" value="1"/>
</dbReference>
<dbReference type="Pfam" id="PF04711">
    <property type="entry name" value="ApoA-II"/>
    <property type="match status" value="1"/>
</dbReference>
<dbReference type="SUPFAM" id="SSF82936">
    <property type="entry name" value="Apolipoprotein A-II"/>
    <property type="match status" value="1"/>
</dbReference>